<evidence type="ECO:0000255" key="1">
    <source>
        <dbReference type="HAMAP-Rule" id="MF_00038"/>
    </source>
</evidence>
<accession>Q0BIK4</accession>
<feature type="chain" id="PRO_1000002946" description="Phospho-N-acetylmuramoyl-pentapeptide-transferase">
    <location>
        <begin position="1"/>
        <end position="389"/>
    </location>
</feature>
<feature type="transmembrane region" description="Helical" evidence="1">
    <location>
        <begin position="25"/>
        <end position="45"/>
    </location>
</feature>
<feature type="transmembrane region" description="Helical" evidence="1">
    <location>
        <begin position="73"/>
        <end position="93"/>
    </location>
</feature>
<feature type="transmembrane region" description="Helical" evidence="1">
    <location>
        <begin position="97"/>
        <end position="117"/>
    </location>
</feature>
<feature type="transmembrane region" description="Helical" evidence="1">
    <location>
        <begin position="135"/>
        <end position="155"/>
    </location>
</feature>
<feature type="transmembrane region" description="Helical" evidence="1">
    <location>
        <begin position="190"/>
        <end position="210"/>
    </location>
</feature>
<feature type="transmembrane region" description="Helical" evidence="1">
    <location>
        <begin position="222"/>
        <end position="242"/>
    </location>
</feature>
<feature type="transmembrane region" description="Helical" evidence="1">
    <location>
        <begin position="258"/>
        <end position="278"/>
    </location>
</feature>
<feature type="transmembrane region" description="Helical" evidence="1">
    <location>
        <begin position="286"/>
        <end position="306"/>
    </location>
</feature>
<feature type="transmembrane region" description="Helical" evidence="1">
    <location>
        <begin position="311"/>
        <end position="331"/>
    </location>
</feature>
<feature type="transmembrane region" description="Helical" evidence="1">
    <location>
        <begin position="366"/>
        <end position="386"/>
    </location>
</feature>
<organism>
    <name type="scientific">Burkholderia ambifaria (strain ATCC BAA-244 / DSM 16087 / CCUG 44356 / LMG 19182 / AMMD)</name>
    <name type="common">Burkholderia cepacia (strain AMMD)</name>
    <dbReference type="NCBI Taxonomy" id="339670"/>
    <lineage>
        <taxon>Bacteria</taxon>
        <taxon>Pseudomonadati</taxon>
        <taxon>Pseudomonadota</taxon>
        <taxon>Betaproteobacteria</taxon>
        <taxon>Burkholderiales</taxon>
        <taxon>Burkholderiaceae</taxon>
        <taxon>Burkholderia</taxon>
        <taxon>Burkholderia cepacia complex</taxon>
    </lineage>
</organism>
<reference key="1">
    <citation type="submission" date="2006-08" db="EMBL/GenBank/DDBJ databases">
        <title>Complete sequence of chromosome 1 of Burkholderia cepacia AMMD.</title>
        <authorList>
            <person name="Copeland A."/>
            <person name="Lucas S."/>
            <person name="Lapidus A."/>
            <person name="Barry K."/>
            <person name="Detter J.C."/>
            <person name="Glavina del Rio T."/>
            <person name="Hammon N."/>
            <person name="Israni S."/>
            <person name="Pitluck S."/>
            <person name="Bruce D."/>
            <person name="Chain P."/>
            <person name="Malfatti S."/>
            <person name="Shin M."/>
            <person name="Vergez L."/>
            <person name="Schmutz J."/>
            <person name="Larimer F."/>
            <person name="Land M."/>
            <person name="Hauser L."/>
            <person name="Kyrpides N."/>
            <person name="Kim E."/>
            <person name="Parke J."/>
            <person name="Coenye T."/>
            <person name="Konstantinidis K."/>
            <person name="Ramette A."/>
            <person name="Tiedje J."/>
            <person name="Richardson P."/>
        </authorList>
    </citation>
    <scope>NUCLEOTIDE SEQUENCE [LARGE SCALE GENOMIC DNA]</scope>
    <source>
        <strain>ATCC BAA-244 / DSM 16087 / CCUG 44356 / LMG 19182 / AMMD</strain>
    </source>
</reference>
<sequence>MLLALAQWLQGDASFLRLFTYLTFRAVMATITALGIGLVCGPWVIRKLTQMKVGQAVRKDGPQSHLVKSGTPTMGGVLILIGIAVATLLWGDLTNRFIWIVMLVTFGFGVIGWVDDYRKVVYKDPRGMSSREKYFWQSVIGLFAAVYLAFSVSEANNVRVFDLFMAWVRSGLSMGLPARADLMLPFLKSISYPLGVWGFIVLTYFVIVGASNAVNLTDGLDGLVIMPVVLVGGSLGVFAYVMGSSVYSKYLLFPHIPGAGELLIFCSAMGGAGLAFLWYNTHPAQVFMGDVGALALGGALGTVAVIVRQEIVLFIMGGIFVAETLSVMLQVSWFKYTKKRYGEGRRLLKMAPLHHHFELSGWKETQVVVRFWIITLMLCLFGLSTLKLR</sequence>
<protein>
    <recommendedName>
        <fullName evidence="1">Phospho-N-acetylmuramoyl-pentapeptide-transferase</fullName>
        <ecNumber evidence="1">2.7.8.13</ecNumber>
    </recommendedName>
    <alternativeName>
        <fullName evidence="1">UDP-MurNAc-pentapeptide phosphotransferase</fullName>
    </alternativeName>
</protein>
<gene>
    <name evidence="1" type="primary">mraY</name>
    <name type="ordered locus">Bamb_0460</name>
</gene>
<name>MRAY_BURCM</name>
<comment type="function">
    <text evidence="1">Catalyzes the initial step of the lipid cycle reactions in the biosynthesis of the cell wall peptidoglycan: transfers peptidoglycan precursor phospho-MurNAc-pentapeptide from UDP-MurNAc-pentapeptide onto the lipid carrier undecaprenyl phosphate, yielding undecaprenyl-pyrophosphoryl-MurNAc-pentapeptide, known as lipid I.</text>
</comment>
<comment type="catalytic activity">
    <reaction evidence="1">
        <text>UDP-N-acetyl-alpha-D-muramoyl-L-alanyl-gamma-D-glutamyl-meso-2,6-diaminopimeloyl-D-alanyl-D-alanine + di-trans,octa-cis-undecaprenyl phosphate = di-trans,octa-cis-undecaprenyl diphospho-N-acetyl-alpha-D-muramoyl-L-alanyl-D-glutamyl-meso-2,6-diaminopimeloyl-D-alanyl-D-alanine + UMP</text>
        <dbReference type="Rhea" id="RHEA:28386"/>
        <dbReference type="ChEBI" id="CHEBI:57865"/>
        <dbReference type="ChEBI" id="CHEBI:60392"/>
        <dbReference type="ChEBI" id="CHEBI:61386"/>
        <dbReference type="ChEBI" id="CHEBI:61387"/>
        <dbReference type="EC" id="2.7.8.13"/>
    </reaction>
</comment>
<comment type="cofactor">
    <cofactor evidence="1">
        <name>Mg(2+)</name>
        <dbReference type="ChEBI" id="CHEBI:18420"/>
    </cofactor>
</comment>
<comment type="pathway">
    <text evidence="1">Cell wall biogenesis; peptidoglycan biosynthesis.</text>
</comment>
<comment type="subcellular location">
    <subcellularLocation>
        <location evidence="1">Cell inner membrane</location>
        <topology evidence="1">Multi-pass membrane protein</topology>
    </subcellularLocation>
</comment>
<comment type="similarity">
    <text evidence="1">Belongs to the glycosyltransferase 4 family. MraY subfamily.</text>
</comment>
<keyword id="KW-0131">Cell cycle</keyword>
<keyword id="KW-0132">Cell division</keyword>
<keyword id="KW-0997">Cell inner membrane</keyword>
<keyword id="KW-1003">Cell membrane</keyword>
<keyword id="KW-0133">Cell shape</keyword>
<keyword id="KW-0961">Cell wall biogenesis/degradation</keyword>
<keyword id="KW-0460">Magnesium</keyword>
<keyword id="KW-0472">Membrane</keyword>
<keyword id="KW-0479">Metal-binding</keyword>
<keyword id="KW-0573">Peptidoglycan synthesis</keyword>
<keyword id="KW-0808">Transferase</keyword>
<keyword id="KW-0812">Transmembrane</keyword>
<keyword id="KW-1133">Transmembrane helix</keyword>
<proteinExistence type="inferred from homology"/>
<dbReference type="EC" id="2.7.8.13" evidence="1"/>
<dbReference type="EMBL" id="CP000440">
    <property type="protein sequence ID" value="ABI86019.1"/>
    <property type="molecule type" value="Genomic_DNA"/>
</dbReference>
<dbReference type="RefSeq" id="WP_006752439.1">
    <property type="nucleotide sequence ID" value="NZ_CP009798.1"/>
</dbReference>
<dbReference type="SMR" id="Q0BIK4"/>
<dbReference type="GeneID" id="93084123"/>
<dbReference type="KEGG" id="bam:Bamb_0460"/>
<dbReference type="PATRIC" id="fig|339670.21.peg.1146"/>
<dbReference type="eggNOG" id="COG0472">
    <property type="taxonomic scope" value="Bacteria"/>
</dbReference>
<dbReference type="UniPathway" id="UPA00219"/>
<dbReference type="Proteomes" id="UP000000662">
    <property type="component" value="Chromosome 1"/>
</dbReference>
<dbReference type="GO" id="GO:0005886">
    <property type="term" value="C:plasma membrane"/>
    <property type="evidence" value="ECO:0007669"/>
    <property type="project" value="UniProtKB-SubCell"/>
</dbReference>
<dbReference type="GO" id="GO:0046872">
    <property type="term" value="F:metal ion binding"/>
    <property type="evidence" value="ECO:0007669"/>
    <property type="project" value="UniProtKB-KW"/>
</dbReference>
<dbReference type="GO" id="GO:0008963">
    <property type="term" value="F:phospho-N-acetylmuramoyl-pentapeptide-transferase activity"/>
    <property type="evidence" value="ECO:0007669"/>
    <property type="project" value="UniProtKB-UniRule"/>
</dbReference>
<dbReference type="GO" id="GO:0051992">
    <property type="term" value="F:UDP-N-acetylmuramoyl-L-alanyl-D-glutamyl-meso-2,6-diaminopimelyl-D-alanyl-D-alanine:undecaprenyl-phosphate transferase activity"/>
    <property type="evidence" value="ECO:0007669"/>
    <property type="project" value="RHEA"/>
</dbReference>
<dbReference type="GO" id="GO:0051301">
    <property type="term" value="P:cell division"/>
    <property type="evidence" value="ECO:0007669"/>
    <property type="project" value="UniProtKB-KW"/>
</dbReference>
<dbReference type="GO" id="GO:0071555">
    <property type="term" value="P:cell wall organization"/>
    <property type="evidence" value="ECO:0007669"/>
    <property type="project" value="UniProtKB-KW"/>
</dbReference>
<dbReference type="GO" id="GO:0009252">
    <property type="term" value="P:peptidoglycan biosynthetic process"/>
    <property type="evidence" value="ECO:0007669"/>
    <property type="project" value="UniProtKB-UniRule"/>
</dbReference>
<dbReference type="GO" id="GO:0008360">
    <property type="term" value="P:regulation of cell shape"/>
    <property type="evidence" value="ECO:0007669"/>
    <property type="project" value="UniProtKB-KW"/>
</dbReference>
<dbReference type="CDD" id="cd06852">
    <property type="entry name" value="GT_MraY"/>
    <property type="match status" value="1"/>
</dbReference>
<dbReference type="HAMAP" id="MF_00038">
    <property type="entry name" value="MraY"/>
    <property type="match status" value="1"/>
</dbReference>
<dbReference type="InterPro" id="IPR000715">
    <property type="entry name" value="Glycosyl_transferase_4"/>
</dbReference>
<dbReference type="InterPro" id="IPR003524">
    <property type="entry name" value="PNAcMuramoyl-5peptid_Trfase"/>
</dbReference>
<dbReference type="InterPro" id="IPR018480">
    <property type="entry name" value="PNAcMuramoyl-5peptid_Trfase_CS"/>
</dbReference>
<dbReference type="NCBIfam" id="TIGR00445">
    <property type="entry name" value="mraY"/>
    <property type="match status" value="1"/>
</dbReference>
<dbReference type="PANTHER" id="PTHR22926">
    <property type="entry name" value="PHOSPHO-N-ACETYLMURAMOYL-PENTAPEPTIDE-TRANSFERASE"/>
    <property type="match status" value="1"/>
</dbReference>
<dbReference type="PANTHER" id="PTHR22926:SF5">
    <property type="entry name" value="PHOSPHO-N-ACETYLMURAMOYL-PENTAPEPTIDE-TRANSFERASE HOMOLOG"/>
    <property type="match status" value="1"/>
</dbReference>
<dbReference type="Pfam" id="PF00953">
    <property type="entry name" value="Glycos_transf_4"/>
    <property type="match status" value="1"/>
</dbReference>
<dbReference type="Pfam" id="PF10555">
    <property type="entry name" value="MraY_sig1"/>
    <property type="match status" value="1"/>
</dbReference>
<dbReference type="PROSITE" id="PS01347">
    <property type="entry name" value="MRAY_1"/>
    <property type="match status" value="1"/>
</dbReference>
<dbReference type="PROSITE" id="PS01348">
    <property type="entry name" value="MRAY_2"/>
    <property type="match status" value="1"/>
</dbReference>